<keyword id="KW-0963">Cytoplasm</keyword>
<keyword id="KW-0324">Glycolysis</keyword>
<keyword id="KW-0520">NAD</keyword>
<keyword id="KW-0560">Oxidoreductase</keyword>
<keyword id="KW-1185">Reference proteome</keyword>
<protein>
    <recommendedName>
        <fullName>Glyceraldehyde-3-phosphate dehydrogenase 1</fullName>
        <shortName>GAPDH-1</shortName>
        <ecNumber>1.2.1.12</ecNumber>
    </recommendedName>
</protein>
<proteinExistence type="evidence at transcript level"/>
<name>G3P1_GLORO</name>
<accession>O16027</accession>
<feature type="chain" id="PRO_0000145516" description="Glyceraldehyde-3-phosphate dehydrogenase 1">
    <location>
        <begin position="1"/>
        <end position="324" status="greater than"/>
    </location>
</feature>
<feature type="active site" description="Nucleophile" evidence="2">
    <location>
        <position position="158"/>
    </location>
</feature>
<feature type="binding site" evidence="1">
    <location>
        <begin position="13"/>
        <end position="14"/>
    </location>
    <ligand>
        <name>NAD(+)</name>
        <dbReference type="ChEBI" id="CHEBI:57540"/>
    </ligand>
</feature>
<feature type="binding site" evidence="1">
    <location>
        <position position="35"/>
    </location>
    <ligand>
        <name>NAD(+)</name>
        <dbReference type="ChEBI" id="CHEBI:57540"/>
    </ligand>
</feature>
<feature type="binding site" evidence="1">
    <location>
        <position position="85"/>
    </location>
    <ligand>
        <name>NAD(+)</name>
        <dbReference type="ChEBI" id="CHEBI:57540"/>
    </ligand>
</feature>
<feature type="binding site" evidence="1">
    <location>
        <begin position="157"/>
        <end position="159"/>
    </location>
    <ligand>
        <name>D-glyceraldehyde 3-phosphate</name>
        <dbReference type="ChEBI" id="CHEBI:59776"/>
    </ligand>
</feature>
<feature type="binding site" evidence="1">
    <location>
        <position position="188"/>
    </location>
    <ligand>
        <name>D-glyceraldehyde 3-phosphate</name>
        <dbReference type="ChEBI" id="CHEBI:59776"/>
    </ligand>
</feature>
<feature type="binding site" evidence="1">
    <location>
        <begin position="217"/>
        <end position="218"/>
    </location>
    <ligand>
        <name>D-glyceraldehyde 3-phosphate</name>
        <dbReference type="ChEBI" id="CHEBI:59776"/>
    </ligand>
</feature>
<feature type="binding site" evidence="1">
    <location>
        <position position="240"/>
    </location>
    <ligand>
        <name>D-glyceraldehyde 3-phosphate</name>
        <dbReference type="ChEBI" id="CHEBI:59776"/>
    </ligand>
</feature>
<feature type="binding site" evidence="1">
    <location>
        <position position="322"/>
    </location>
    <ligand>
        <name>NAD(+)</name>
        <dbReference type="ChEBI" id="CHEBI:57540"/>
    </ligand>
</feature>
<feature type="non-terminal residue">
    <location>
        <position position="324"/>
    </location>
</feature>
<evidence type="ECO:0000250" key="1"/>
<evidence type="ECO:0000255" key="2">
    <source>
        <dbReference type="PROSITE-ProRule" id="PRU10009"/>
    </source>
</evidence>
<evidence type="ECO:0000305" key="3"/>
<dbReference type="EC" id="1.2.1.12"/>
<dbReference type="EMBL" id="AF004522">
    <property type="protein sequence ID" value="AAC79129.1"/>
    <property type="molecule type" value="mRNA"/>
</dbReference>
<dbReference type="SMR" id="O16027"/>
<dbReference type="UniPathway" id="UPA00109">
    <property type="reaction ID" value="UER00184"/>
</dbReference>
<dbReference type="Proteomes" id="UP000887572">
    <property type="component" value="Unplaced"/>
</dbReference>
<dbReference type="GO" id="GO:0005829">
    <property type="term" value="C:cytosol"/>
    <property type="evidence" value="ECO:0007669"/>
    <property type="project" value="TreeGrafter"/>
</dbReference>
<dbReference type="GO" id="GO:0004365">
    <property type="term" value="F:glyceraldehyde-3-phosphate dehydrogenase (NAD+) (phosphorylating) activity"/>
    <property type="evidence" value="ECO:0007669"/>
    <property type="project" value="UniProtKB-EC"/>
</dbReference>
<dbReference type="GO" id="GO:0051287">
    <property type="term" value="F:NAD binding"/>
    <property type="evidence" value="ECO:0007669"/>
    <property type="project" value="InterPro"/>
</dbReference>
<dbReference type="GO" id="GO:0050661">
    <property type="term" value="F:NADP binding"/>
    <property type="evidence" value="ECO:0007669"/>
    <property type="project" value="InterPro"/>
</dbReference>
<dbReference type="GO" id="GO:0006006">
    <property type="term" value="P:glucose metabolic process"/>
    <property type="evidence" value="ECO:0007669"/>
    <property type="project" value="InterPro"/>
</dbReference>
<dbReference type="GO" id="GO:0006096">
    <property type="term" value="P:glycolytic process"/>
    <property type="evidence" value="ECO:0007669"/>
    <property type="project" value="UniProtKB-UniPathway"/>
</dbReference>
<dbReference type="CDD" id="cd18126">
    <property type="entry name" value="GAPDH_I_C"/>
    <property type="match status" value="1"/>
</dbReference>
<dbReference type="CDD" id="cd05214">
    <property type="entry name" value="GAPDH_I_N"/>
    <property type="match status" value="1"/>
</dbReference>
<dbReference type="FunFam" id="3.30.360.10:FF:000001">
    <property type="entry name" value="Glyceraldehyde-3-phosphate dehydrogenase"/>
    <property type="match status" value="1"/>
</dbReference>
<dbReference type="FunFam" id="3.40.50.720:FF:000266">
    <property type="entry name" value="Glyceraldehyde-3-phosphate dehydrogenase"/>
    <property type="match status" value="1"/>
</dbReference>
<dbReference type="Gene3D" id="3.30.360.10">
    <property type="entry name" value="Dihydrodipicolinate Reductase, domain 2"/>
    <property type="match status" value="1"/>
</dbReference>
<dbReference type="Gene3D" id="3.40.50.720">
    <property type="entry name" value="NAD(P)-binding Rossmann-like Domain"/>
    <property type="match status" value="1"/>
</dbReference>
<dbReference type="InterPro" id="IPR020831">
    <property type="entry name" value="GlycerAld/Erythrose_P_DH"/>
</dbReference>
<dbReference type="InterPro" id="IPR020830">
    <property type="entry name" value="GlycerAld_3-P_DH_AS"/>
</dbReference>
<dbReference type="InterPro" id="IPR020829">
    <property type="entry name" value="GlycerAld_3-P_DH_cat"/>
</dbReference>
<dbReference type="InterPro" id="IPR020828">
    <property type="entry name" value="GlycerAld_3-P_DH_NAD(P)-bd"/>
</dbReference>
<dbReference type="InterPro" id="IPR006424">
    <property type="entry name" value="Glyceraldehyde-3-P_DH_1"/>
</dbReference>
<dbReference type="InterPro" id="IPR036291">
    <property type="entry name" value="NAD(P)-bd_dom_sf"/>
</dbReference>
<dbReference type="NCBIfam" id="TIGR01534">
    <property type="entry name" value="GAPDH-I"/>
    <property type="match status" value="1"/>
</dbReference>
<dbReference type="PANTHER" id="PTHR10836">
    <property type="entry name" value="GLYCERALDEHYDE 3-PHOSPHATE DEHYDROGENASE"/>
    <property type="match status" value="1"/>
</dbReference>
<dbReference type="PANTHER" id="PTHR10836:SF76">
    <property type="entry name" value="GLYCERALDEHYDE-3-PHOSPHATE DEHYDROGENASE-RELATED"/>
    <property type="match status" value="1"/>
</dbReference>
<dbReference type="Pfam" id="PF02800">
    <property type="entry name" value="Gp_dh_C"/>
    <property type="match status" value="1"/>
</dbReference>
<dbReference type="Pfam" id="PF00044">
    <property type="entry name" value="Gp_dh_N"/>
    <property type="match status" value="1"/>
</dbReference>
<dbReference type="PIRSF" id="PIRSF000149">
    <property type="entry name" value="GAP_DH"/>
    <property type="match status" value="1"/>
</dbReference>
<dbReference type="PRINTS" id="PR00078">
    <property type="entry name" value="G3PDHDRGNASE"/>
</dbReference>
<dbReference type="SMART" id="SM00846">
    <property type="entry name" value="Gp_dh_N"/>
    <property type="match status" value="1"/>
</dbReference>
<dbReference type="SUPFAM" id="SSF55347">
    <property type="entry name" value="Glyceraldehyde-3-phosphate dehydrogenase-like, C-terminal domain"/>
    <property type="match status" value="1"/>
</dbReference>
<dbReference type="SUPFAM" id="SSF51735">
    <property type="entry name" value="NAD(P)-binding Rossmann-fold domains"/>
    <property type="match status" value="1"/>
</dbReference>
<dbReference type="PROSITE" id="PS00071">
    <property type="entry name" value="GAPDH"/>
    <property type="match status" value="1"/>
</dbReference>
<sequence>MVKPKVGINGFGRIGRLALRAAVEKDTVQVVAINDPFIELDYMVYMFNYDSTHGRFNGKISTSAGNLVVEKEGKATHTIKVFNLKDPAEIKWAEVGAEYVIESTGVFTTIEKASAHLKGGAKKVVISAPSADAPMYVMGVNEDKYDPAKDNVISNASCTTNCLAPLAKVINDEFGIIEGLMTTVHAVTATQKTVDGPNGKQWRDGRGAAQNIIPASTGAAKAVGKVIPELNGKLTGMAFRVPTPNVSVVDLTARLEKPASLDAIKAAVKKAAEGNLKGILGYTEDQVVSTDFLGDSRSSIFDAGACISLNPHFVKLVSWYDNEF</sequence>
<reference key="1">
    <citation type="journal article" date="1998" name="Mol. Biochem. Parasitol.">
        <title>Cloning of a trans-spliced glyceraldehyde-3-phosphate-dehydrogenase gene from the potato cyst nematode Globodera rostochiensis and expression of its putative promoter region in Caenorhabditis elegans.</title>
        <authorList>
            <person name="Qin L."/>
            <person name="Smant G."/>
            <person name="Stokkermans J.P.W.G."/>
            <person name="Bakker J."/>
            <person name="Schots A."/>
            <person name="Helder J."/>
        </authorList>
    </citation>
    <scope>NUCLEOTIDE SEQUENCE [MRNA]</scope>
    <source>
        <strain>Ro1 / Mierenbos</strain>
    </source>
</reference>
<comment type="catalytic activity">
    <reaction evidence="2">
        <text>D-glyceraldehyde 3-phosphate + phosphate + NAD(+) = (2R)-3-phospho-glyceroyl phosphate + NADH + H(+)</text>
        <dbReference type="Rhea" id="RHEA:10300"/>
        <dbReference type="ChEBI" id="CHEBI:15378"/>
        <dbReference type="ChEBI" id="CHEBI:43474"/>
        <dbReference type="ChEBI" id="CHEBI:57540"/>
        <dbReference type="ChEBI" id="CHEBI:57604"/>
        <dbReference type="ChEBI" id="CHEBI:57945"/>
        <dbReference type="ChEBI" id="CHEBI:59776"/>
        <dbReference type="EC" id="1.2.1.12"/>
    </reaction>
</comment>
<comment type="pathway">
    <text>Carbohydrate degradation; glycolysis; pyruvate from D-glyceraldehyde 3-phosphate: step 1/5.</text>
</comment>
<comment type="subunit">
    <text evidence="1">Homotetramer.</text>
</comment>
<comment type="subcellular location">
    <subcellularLocation>
        <location evidence="1">Cytoplasm</location>
    </subcellularLocation>
</comment>
<comment type="similarity">
    <text evidence="3">Belongs to the glyceraldehyde-3-phosphate dehydrogenase family.</text>
</comment>
<gene>
    <name type="primary">GPD-1</name>
</gene>
<organism>
    <name type="scientific">Globodera rostochiensis</name>
    <name type="common">Golden nematode worm</name>
    <name type="synonym">Heterodera rostochiensis</name>
    <dbReference type="NCBI Taxonomy" id="31243"/>
    <lineage>
        <taxon>Eukaryota</taxon>
        <taxon>Metazoa</taxon>
        <taxon>Ecdysozoa</taxon>
        <taxon>Nematoda</taxon>
        <taxon>Chromadorea</taxon>
        <taxon>Rhabditida</taxon>
        <taxon>Tylenchina</taxon>
        <taxon>Tylenchomorpha</taxon>
        <taxon>Tylenchoidea</taxon>
        <taxon>Heteroderidae</taxon>
        <taxon>Heteroderinae</taxon>
        <taxon>Globodera</taxon>
    </lineage>
</organism>